<reference key="1">
    <citation type="journal article" date="2005" name="Nucleic Acids Res.">
        <title>Genome dynamics and diversity of Shigella species, the etiologic agents of bacillary dysentery.</title>
        <authorList>
            <person name="Yang F."/>
            <person name="Yang J."/>
            <person name="Zhang X."/>
            <person name="Chen L."/>
            <person name="Jiang Y."/>
            <person name="Yan Y."/>
            <person name="Tang X."/>
            <person name="Wang J."/>
            <person name="Xiong Z."/>
            <person name="Dong J."/>
            <person name="Xue Y."/>
            <person name="Zhu Y."/>
            <person name="Xu X."/>
            <person name="Sun L."/>
            <person name="Chen S."/>
            <person name="Nie H."/>
            <person name="Peng J."/>
            <person name="Xu J."/>
            <person name="Wang Y."/>
            <person name="Yuan Z."/>
            <person name="Wen Y."/>
            <person name="Yao Z."/>
            <person name="Shen Y."/>
            <person name="Qiang B."/>
            <person name="Hou Y."/>
            <person name="Yu J."/>
            <person name="Jin Q."/>
        </authorList>
    </citation>
    <scope>NUCLEOTIDE SEQUENCE [LARGE SCALE GENOMIC DNA]</scope>
    <source>
        <strain>Sd197</strain>
    </source>
</reference>
<evidence type="ECO:0000255" key="1">
    <source>
        <dbReference type="HAMAP-Rule" id="MF_01973"/>
    </source>
</evidence>
<evidence type="ECO:0000255" key="2">
    <source>
        <dbReference type="PROSITE-ProRule" id="PRU01122"/>
    </source>
</evidence>
<evidence type="ECO:0000255" key="3">
    <source>
        <dbReference type="PROSITE-ProRule" id="PRU01123"/>
    </source>
</evidence>
<evidence type="ECO:0000256" key="4">
    <source>
        <dbReference type="SAM" id="MobiDB-lite"/>
    </source>
</evidence>
<comment type="function">
    <text evidence="1">ATP-dependent serine protease that mediates the selective degradation of mutant and abnormal proteins as well as certain short-lived regulatory proteins. Required for cellular homeostasis and for survival from DNA damage and developmental changes induced by stress. Degrades polypeptides processively to yield small peptide fragments that are 5 to 10 amino acids long. Binds to DNA in a double-stranded, site-specific manner. Endogenous substrates include the regulatory proteins RcsA and SulA, the transcriptional activator SoxS, and UmuD. Its overproduction specifically inhibits translation through at least two different pathways, one of them being the YoeB-YefM toxin-antitoxin system.</text>
</comment>
<comment type="catalytic activity">
    <reaction evidence="1">
        <text>Hydrolysis of proteins in presence of ATP.</text>
        <dbReference type="EC" id="3.4.21.53"/>
    </reaction>
</comment>
<comment type="activity regulation">
    <text evidence="1">Contains an allosteric site (distinct from its active site), whose occupancy by an unfolded polypeptide leads to enzyme activation.</text>
</comment>
<comment type="subunit">
    <text evidence="1">Homohexamer. Organized in a ring with a central cavity. ATP binding and hydrolysis do not affect the oligomeric state of the enzyme.</text>
</comment>
<comment type="subcellular location">
    <subcellularLocation>
        <location evidence="1">Cytoplasm</location>
    </subcellularLocation>
</comment>
<comment type="induction">
    <text evidence="1">By accumulation of abnormal proteins, such as at high temperatures. Under stress conditions.</text>
</comment>
<comment type="similarity">
    <text evidence="1">Belongs to the peptidase S16 family.</text>
</comment>
<protein>
    <recommendedName>
        <fullName evidence="1">Lon protease</fullName>
        <ecNumber evidence="1">3.4.21.53</ecNumber>
    </recommendedName>
    <alternativeName>
        <fullName evidence="1">ATP-dependent protease La</fullName>
    </alternativeName>
</protein>
<dbReference type="EC" id="3.4.21.53" evidence="1"/>
<dbReference type="EMBL" id="CP000034">
    <property type="protein sequence ID" value="ABB60512.1"/>
    <property type="molecule type" value="Genomic_DNA"/>
</dbReference>
<dbReference type="RefSeq" id="YP_402001.1">
    <property type="nucleotide sequence ID" value="NC_007606.1"/>
</dbReference>
<dbReference type="BMRB" id="Q32JJ5"/>
<dbReference type="SMR" id="Q32JJ5"/>
<dbReference type="STRING" id="300267.SDY_0293"/>
<dbReference type="MEROPS" id="S16.001"/>
<dbReference type="EnsemblBacteria" id="ABB60512">
    <property type="protein sequence ID" value="ABB60512"/>
    <property type="gene ID" value="SDY_0293"/>
</dbReference>
<dbReference type="KEGG" id="sdy:SDY_0293"/>
<dbReference type="PATRIC" id="fig|300267.13.peg.338"/>
<dbReference type="HOGENOM" id="CLU_004109_4_3_6"/>
<dbReference type="Proteomes" id="UP000002716">
    <property type="component" value="Chromosome"/>
</dbReference>
<dbReference type="GO" id="GO:0005737">
    <property type="term" value="C:cytoplasm"/>
    <property type="evidence" value="ECO:0007669"/>
    <property type="project" value="UniProtKB-SubCell"/>
</dbReference>
<dbReference type="GO" id="GO:0005524">
    <property type="term" value="F:ATP binding"/>
    <property type="evidence" value="ECO:0007669"/>
    <property type="project" value="UniProtKB-UniRule"/>
</dbReference>
<dbReference type="GO" id="GO:0016887">
    <property type="term" value="F:ATP hydrolysis activity"/>
    <property type="evidence" value="ECO:0007669"/>
    <property type="project" value="UniProtKB-UniRule"/>
</dbReference>
<dbReference type="GO" id="GO:0004176">
    <property type="term" value="F:ATP-dependent peptidase activity"/>
    <property type="evidence" value="ECO:0007669"/>
    <property type="project" value="UniProtKB-UniRule"/>
</dbReference>
<dbReference type="GO" id="GO:0043565">
    <property type="term" value="F:sequence-specific DNA binding"/>
    <property type="evidence" value="ECO:0007669"/>
    <property type="project" value="UniProtKB-UniRule"/>
</dbReference>
<dbReference type="GO" id="GO:0004252">
    <property type="term" value="F:serine-type endopeptidase activity"/>
    <property type="evidence" value="ECO:0007669"/>
    <property type="project" value="UniProtKB-UniRule"/>
</dbReference>
<dbReference type="GO" id="GO:0034605">
    <property type="term" value="P:cellular response to heat"/>
    <property type="evidence" value="ECO:0007669"/>
    <property type="project" value="UniProtKB-UniRule"/>
</dbReference>
<dbReference type="GO" id="GO:0006515">
    <property type="term" value="P:protein quality control for misfolded or incompletely synthesized proteins"/>
    <property type="evidence" value="ECO:0007669"/>
    <property type="project" value="UniProtKB-UniRule"/>
</dbReference>
<dbReference type="CDD" id="cd19500">
    <property type="entry name" value="RecA-like_Lon"/>
    <property type="match status" value="1"/>
</dbReference>
<dbReference type="FunFam" id="1.10.8.60:FF:000035">
    <property type="entry name" value="Lon protease"/>
    <property type="match status" value="1"/>
</dbReference>
<dbReference type="FunFam" id="1.20.58.1480:FF:000001">
    <property type="entry name" value="Lon protease"/>
    <property type="match status" value="1"/>
</dbReference>
<dbReference type="FunFam" id="2.30.130.40:FF:000001">
    <property type="entry name" value="Lon protease"/>
    <property type="match status" value="1"/>
</dbReference>
<dbReference type="FunFam" id="3.30.230.10:FF:000010">
    <property type="entry name" value="Lon protease"/>
    <property type="match status" value="1"/>
</dbReference>
<dbReference type="FunFam" id="1.20.5.5270:FF:000002">
    <property type="entry name" value="Lon protease homolog"/>
    <property type="match status" value="1"/>
</dbReference>
<dbReference type="FunFam" id="3.40.50.300:FF:000021">
    <property type="entry name" value="Lon protease homolog"/>
    <property type="match status" value="1"/>
</dbReference>
<dbReference type="Gene3D" id="1.10.8.60">
    <property type="match status" value="1"/>
</dbReference>
<dbReference type="Gene3D" id="1.20.5.5270">
    <property type="match status" value="1"/>
</dbReference>
<dbReference type="Gene3D" id="1.20.58.1480">
    <property type="match status" value="1"/>
</dbReference>
<dbReference type="Gene3D" id="3.30.230.10">
    <property type="match status" value="1"/>
</dbReference>
<dbReference type="Gene3D" id="2.30.130.40">
    <property type="entry name" value="LON domain-like"/>
    <property type="match status" value="1"/>
</dbReference>
<dbReference type="Gene3D" id="3.40.50.300">
    <property type="entry name" value="P-loop containing nucleotide triphosphate hydrolases"/>
    <property type="match status" value="1"/>
</dbReference>
<dbReference type="HAMAP" id="MF_01973">
    <property type="entry name" value="lon_bact"/>
    <property type="match status" value="1"/>
</dbReference>
<dbReference type="InterPro" id="IPR003593">
    <property type="entry name" value="AAA+_ATPase"/>
</dbReference>
<dbReference type="InterPro" id="IPR003959">
    <property type="entry name" value="ATPase_AAA_core"/>
</dbReference>
<dbReference type="InterPro" id="IPR027543">
    <property type="entry name" value="Lon_bac"/>
</dbReference>
<dbReference type="InterPro" id="IPR004815">
    <property type="entry name" value="Lon_bac/euk-typ"/>
</dbReference>
<dbReference type="InterPro" id="IPR054594">
    <property type="entry name" value="Lon_lid"/>
</dbReference>
<dbReference type="InterPro" id="IPR008269">
    <property type="entry name" value="Lon_proteolytic"/>
</dbReference>
<dbReference type="InterPro" id="IPR027065">
    <property type="entry name" value="Lon_Prtase"/>
</dbReference>
<dbReference type="InterPro" id="IPR003111">
    <property type="entry name" value="Lon_prtase_N"/>
</dbReference>
<dbReference type="InterPro" id="IPR046336">
    <property type="entry name" value="Lon_prtase_N_sf"/>
</dbReference>
<dbReference type="InterPro" id="IPR027417">
    <property type="entry name" value="P-loop_NTPase"/>
</dbReference>
<dbReference type="InterPro" id="IPR008268">
    <property type="entry name" value="Peptidase_S16_AS"/>
</dbReference>
<dbReference type="InterPro" id="IPR015947">
    <property type="entry name" value="PUA-like_sf"/>
</dbReference>
<dbReference type="InterPro" id="IPR020568">
    <property type="entry name" value="Ribosomal_Su5_D2-typ_SF"/>
</dbReference>
<dbReference type="InterPro" id="IPR014721">
    <property type="entry name" value="Ribsml_uS5_D2-typ_fold_subgr"/>
</dbReference>
<dbReference type="NCBIfam" id="TIGR00763">
    <property type="entry name" value="lon"/>
    <property type="match status" value="1"/>
</dbReference>
<dbReference type="NCBIfam" id="NF008053">
    <property type="entry name" value="PRK10787.1"/>
    <property type="match status" value="1"/>
</dbReference>
<dbReference type="PANTHER" id="PTHR10046">
    <property type="entry name" value="ATP DEPENDENT LON PROTEASE FAMILY MEMBER"/>
    <property type="match status" value="1"/>
</dbReference>
<dbReference type="Pfam" id="PF00004">
    <property type="entry name" value="AAA"/>
    <property type="match status" value="1"/>
</dbReference>
<dbReference type="Pfam" id="PF05362">
    <property type="entry name" value="Lon_C"/>
    <property type="match status" value="1"/>
</dbReference>
<dbReference type="Pfam" id="PF22667">
    <property type="entry name" value="Lon_lid"/>
    <property type="match status" value="1"/>
</dbReference>
<dbReference type="Pfam" id="PF02190">
    <property type="entry name" value="LON_substr_bdg"/>
    <property type="match status" value="1"/>
</dbReference>
<dbReference type="PIRSF" id="PIRSF001174">
    <property type="entry name" value="Lon_proteas"/>
    <property type="match status" value="1"/>
</dbReference>
<dbReference type="PRINTS" id="PR00830">
    <property type="entry name" value="ENDOLAPTASE"/>
</dbReference>
<dbReference type="SMART" id="SM00382">
    <property type="entry name" value="AAA"/>
    <property type="match status" value="1"/>
</dbReference>
<dbReference type="SMART" id="SM00464">
    <property type="entry name" value="LON"/>
    <property type="match status" value="1"/>
</dbReference>
<dbReference type="SUPFAM" id="SSF52540">
    <property type="entry name" value="P-loop containing nucleoside triphosphate hydrolases"/>
    <property type="match status" value="1"/>
</dbReference>
<dbReference type="SUPFAM" id="SSF88697">
    <property type="entry name" value="PUA domain-like"/>
    <property type="match status" value="1"/>
</dbReference>
<dbReference type="SUPFAM" id="SSF54211">
    <property type="entry name" value="Ribosomal protein S5 domain 2-like"/>
    <property type="match status" value="1"/>
</dbReference>
<dbReference type="PROSITE" id="PS51787">
    <property type="entry name" value="LON_N"/>
    <property type="match status" value="1"/>
</dbReference>
<dbReference type="PROSITE" id="PS51786">
    <property type="entry name" value="LON_PROTEOLYTIC"/>
    <property type="match status" value="1"/>
</dbReference>
<dbReference type="PROSITE" id="PS01046">
    <property type="entry name" value="LON_SER"/>
    <property type="match status" value="1"/>
</dbReference>
<gene>
    <name evidence="1" type="primary">lon</name>
    <name type="ordered locus">SDY_0293</name>
</gene>
<keyword id="KW-0067">ATP-binding</keyword>
<keyword id="KW-0963">Cytoplasm</keyword>
<keyword id="KW-0378">Hydrolase</keyword>
<keyword id="KW-0547">Nucleotide-binding</keyword>
<keyword id="KW-0645">Protease</keyword>
<keyword id="KW-1185">Reference proteome</keyword>
<keyword id="KW-0720">Serine protease</keyword>
<keyword id="KW-0346">Stress response</keyword>
<sequence>MNPERSERIEIPVLPLRDVVVYPHMVIPLFVGREKSIRCLEAAMDHDKKIMLVAQKEASTDEPGVNDLFTVGTVASILQMLKLPDGTVKVLVEGLQRARISALSDNGEHFSAKAEYLESPTIDEREQEVLVRTAISQFEGYIKLNKKIPPEVLTSLNSIDDPARLADTIAAHMPLKLADKQSVLEMSDVNERLEYLMAMMESEIDLLQVEKRIRNRVKKQMEKSQREYYLNEQMKAIQKELGEMDDAPDENEALKRKIDAAKMPKEAKEKAEAELQKLKMMSPMSAEATVVRGYIDWMVQVPWNARSKVKKDLRQAQEILDTDHYGLERVKDRILEYLAVQSRVNKIKGPILCLVGPPGVGKTSLGQSIAKATGRKYVRMALGGVRDEAEIRGHRRTYIGSMPGKLIQKMAKVGVKNPLFLLDEIDKMSSDMRGDPASALLEVLDPEQNVAFSDHYLEVDYDLSDVMFVATSNSMNIPAPLLDRMEVIRLSGYTEDEKLNIAKRHLLPKQIERNALKKGELTVDDSAIIGIIRYYTREAGVRGLEREISKLCRKAVKQLLLDKSLKHIEINGDNLHDYLGVQRFDYGRADNENRVGQVTGLAWTEVGGDLLTIETACVPGKGKLTYTGSLGEVMQESIQAALTVVRARAEKLGINPDFYEKRDIHVHVPEGATPKDGPSAGIAMCTALVSCLTGNPVRADVAMTGEITLRGQVLPIGGLKEKLLAAHRGGIKTVLIPFENKRDLKENPDNAKADQDRHPVKNNEEEQTLSLQNYPSVFLFFFFFFFEAIEAFNRFTAAGLKIACPAAILSLN</sequence>
<organism>
    <name type="scientific">Shigella dysenteriae serotype 1 (strain Sd197)</name>
    <dbReference type="NCBI Taxonomy" id="300267"/>
    <lineage>
        <taxon>Bacteria</taxon>
        <taxon>Pseudomonadati</taxon>
        <taxon>Pseudomonadota</taxon>
        <taxon>Gammaproteobacteria</taxon>
        <taxon>Enterobacterales</taxon>
        <taxon>Enterobacteriaceae</taxon>
        <taxon>Shigella</taxon>
    </lineage>
</organism>
<proteinExistence type="inferred from homology"/>
<feature type="chain" id="PRO_0000396597" description="Lon protease">
    <location>
        <begin position="1"/>
        <end position="812"/>
    </location>
</feature>
<feature type="domain" description="Lon N-terminal" evidence="3">
    <location>
        <begin position="11"/>
        <end position="204"/>
    </location>
</feature>
<feature type="domain" description="Lon proteolytic" evidence="2">
    <location>
        <begin position="592"/>
        <end position="773"/>
    </location>
</feature>
<feature type="region of interest" description="Disordered" evidence="4">
    <location>
        <begin position="745"/>
        <end position="766"/>
    </location>
</feature>
<feature type="compositionally biased region" description="Basic and acidic residues" evidence="4">
    <location>
        <begin position="745"/>
        <end position="764"/>
    </location>
</feature>
<feature type="active site" evidence="1">
    <location>
        <position position="679"/>
    </location>
</feature>
<feature type="active site" evidence="1">
    <location>
        <position position="722"/>
    </location>
</feature>
<feature type="binding site" evidence="1">
    <location>
        <begin position="356"/>
        <end position="363"/>
    </location>
    <ligand>
        <name>ATP</name>
        <dbReference type="ChEBI" id="CHEBI:30616"/>
    </ligand>
</feature>
<accession>Q32JJ5</accession>
<name>LON_SHIDS</name>